<organism>
    <name type="scientific">Onchocerca volvulus</name>
    <dbReference type="NCBI Taxonomy" id="6282"/>
    <lineage>
        <taxon>Eukaryota</taxon>
        <taxon>Metazoa</taxon>
        <taxon>Ecdysozoa</taxon>
        <taxon>Nematoda</taxon>
        <taxon>Chromadorea</taxon>
        <taxon>Rhabditida</taxon>
        <taxon>Spirurina</taxon>
        <taxon>Spiruromorpha</taxon>
        <taxon>Filarioidea</taxon>
        <taxon>Onchocercidae</taxon>
        <taxon>Onchocerca</taxon>
    </lineage>
</organism>
<reference key="1">
    <citation type="submission" date="1996-11" db="EMBL/GenBank/DDBJ databases">
        <authorList>
            <person name="Schneider E.A."/>
            <person name="Gallin M."/>
        </authorList>
    </citation>
    <scope>NUCLEOTIDE SEQUENCE [MRNA]</scope>
</reference>
<reference key="2">
    <citation type="submission" date="1997-04" db="EMBL/GenBank/DDBJ databases">
        <title>Onchocerca volvulus: molecular cloning and characterization of a larval antigen, OvB95 recognized by putatively immune individuals from Liberia and Ecuador.</title>
        <authorList>
            <person name="Joseph G.T."/>
            <person name="Huima T."/>
            <person name="Lustigman S."/>
        </authorList>
    </citation>
    <scope>NUCLEOTIDE SEQUENCE [MRNA]</scope>
    <source>
        <strain>Forest</strain>
    </source>
</reference>
<protein>
    <recommendedName>
        <fullName>Glyceraldehyde-3-phosphate dehydrogenase</fullName>
        <shortName>GAPDH</shortName>
        <ecNumber>1.2.1.12</ecNumber>
    </recommendedName>
    <alternativeName>
        <fullName>Larval antigen OvB95</fullName>
    </alternativeName>
</protein>
<sequence length="339" mass="36180">MSKPKIGINGFGRIGRLVLRAAVEKDTVEVVAVNDPFINIDYMVYMFKYDSTHGRFKGHVSAEGGKLIVTNGKTTHQIAVHNSKDPAEIPWGVEGAEYVVESTGVFTHTEKASAHLKGGAKKVIISAPSADAPMFVMGVNNDKYDKANNHIISNASCTTNCLAPLAKVIHDKFGIIEGLMTTVHATTATQKTVDGPSGKLWRDGRGAGQNIIPASTGAAKAVGKVIPDLNGKLTGMASRVPTPDVSVVDLTCRLQKGASMDEIKAAVKEAAAGPMKGILEYTEDQVVSSDFVGDPHSSIFDALACISLNPNFVKLIAWYDNEYGYSNRVVDLISYNASK</sequence>
<keyword id="KW-0963">Cytoplasm</keyword>
<keyword id="KW-0324">Glycolysis</keyword>
<keyword id="KW-0520">NAD</keyword>
<keyword id="KW-0560">Oxidoreductase</keyword>
<keyword id="KW-1185">Reference proteome</keyword>
<feature type="chain" id="PRO_0000145519" description="Glyceraldehyde-3-phosphate dehydrogenase">
    <location>
        <begin position="1"/>
        <end position="339"/>
    </location>
</feature>
<feature type="active site" description="Nucleophile" evidence="2">
    <location>
        <position position="157"/>
    </location>
</feature>
<feature type="binding site" evidence="1">
    <location>
        <begin position="13"/>
        <end position="14"/>
    </location>
    <ligand>
        <name>NAD(+)</name>
        <dbReference type="ChEBI" id="CHEBI:57540"/>
    </ligand>
</feature>
<feature type="binding site" evidence="1">
    <location>
        <position position="35"/>
    </location>
    <ligand>
        <name>NAD(+)</name>
        <dbReference type="ChEBI" id="CHEBI:57540"/>
    </ligand>
</feature>
<feature type="binding site" evidence="1">
    <location>
        <position position="84"/>
    </location>
    <ligand>
        <name>NAD(+)</name>
        <dbReference type="ChEBI" id="CHEBI:57540"/>
    </ligand>
</feature>
<feature type="binding site" evidence="1">
    <location>
        <begin position="156"/>
        <end position="158"/>
    </location>
    <ligand>
        <name>D-glyceraldehyde 3-phosphate</name>
        <dbReference type="ChEBI" id="CHEBI:59776"/>
    </ligand>
</feature>
<feature type="binding site" evidence="1">
    <location>
        <position position="187"/>
    </location>
    <ligand>
        <name>D-glyceraldehyde 3-phosphate</name>
        <dbReference type="ChEBI" id="CHEBI:59776"/>
    </ligand>
</feature>
<feature type="binding site" evidence="1">
    <location>
        <begin position="216"/>
        <end position="217"/>
    </location>
    <ligand>
        <name>D-glyceraldehyde 3-phosphate</name>
        <dbReference type="ChEBI" id="CHEBI:59776"/>
    </ligand>
</feature>
<feature type="binding site" evidence="1">
    <location>
        <position position="239"/>
    </location>
    <ligand>
        <name>D-glyceraldehyde 3-phosphate</name>
        <dbReference type="ChEBI" id="CHEBI:59776"/>
    </ligand>
</feature>
<feature type="binding site" evidence="1">
    <location>
        <position position="321"/>
    </location>
    <ligand>
        <name>NAD(+)</name>
        <dbReference type="ChEBI" id="CHEBI:57540"/>
    </ligand>
</feature>
<feature type="site" description="Activates thiol group during catalysis" evidence="1">
    <location>
        <position position="184"/>
    </location>
</feature>
<feature type="sequence conflict" description="In Ref. 2; AAB52599." evidence="3" ref="2">
    <original>H</original>
    <variation>T</variation>
    <location>
        <position position="108"/>
    </location>
</feature>
<feature type="sequence conflict" description="In Ref. 2; AAB52599." evidence="3" ref="2">
    <original>S</original>
    <variation>F</variation>
    <location>
        <position position="238"/>
    </location>
</feature>
<feature type="sequence conflict" description="In Ref. 2; AAB52599." evidence="3" ref="2">
    <original>H</original>
    <variation>Y</variation>
    <location>
        <position position="296"/>
    </location>
</feature>
<feature type="sequence conflict" description="In Ref. 2; AAB52599." evidence="3" ref="2">
    <original>C</original>
    <variation>R</variation>
    <location>
        <position position="305"/>
    </location>
</feature>
<feature type="sequence conflict" description="In Ref. 2; AAB52599." evidence="3" ref="2">
    <original>V</original>
    <variation>I</variation>
    <location>
        <position position="330"/>
    </location>
</feature>
<feature type="sequence conflict" description="In Ref. 2; AAB52599." evidence="3" ref="2">
    <original>N</original>
    <variation>I</variation>
    <location>
        <position position="336"/>
    </location>
</feature>
<proteinExistence type="evidence at transcript level"/>
<evidence type="ECO:0000250" key="1"/>
<evidence type="ECO:0000255" key="2">
    <source>
        <dbReference type="PROSITE-ProRule" id="PRU10009"/>
    </source>
</evidence>
<evidence type="ECO:0000305" key="3"/>
<dbReference type="EC" id="1.2.1.12"/>
<dbReference type="EMBL" id="Y09455">
    <property type="protein sequence ID" value="CAA70607.1"/>
    <property type="molecule type" value="mRNA"/>
</dbReference>
<dbReference type="EMBL" id="U96177">
    <property type="protein sequence ID" value="AAB52599.1"/>
    <property type="molecule type" value="mRNA"/>
</dbReference>
<dbReference type="SMR" id="O01360"/>
<dbReference type="STRING" id="6282.O01360"/>
<dbReference type="HOGENOM" id="CLU_030140_0_3_1"/>
<dbReference type="UniPathway" id="UPA00109">
    <property type="reaction ID" value="UER00184"/>
</dbReference>
<dbReference type="Proteomes" id="UP000024404">
    <property type="component" value="Unassembled WGS sequence"/>
</dbReference>
<dbReference type="GO" id="GO:0005829">
    <property type="term" value="C:cytosol"/>
    <property type="evidence" value="ECO:0007669"/>
    <property type="project" value="TreeGrafter"/>
</dbReference>
<dbReference type="GO" id="GO:0004365">
    <property type="term" value="F:glyceraldehyde-3-phosphate dehydrogenase (NAD+) (phosphorylating) activity"/>
    <property type="evidence" value="ECO:0007669"/>
    <property type="project" value="UniProtKB-EC"/>
</dbReference>
<dbReference type="GO" id="GO:0051287">
    <property type="term" value="F:NAD binding"/>
    <property type="evidence" value="ECO:0007669"/>
    <property type="project" value="InterPro"/>
</dbReference>
<dbReference type="GO" id="GO:0050661">
    <property type="term" value="F:NADP binding"/>
    <property type="evidence" value="ECO:0007669"/>
    <property type="project" value="InterPro"/>
</dbReference>
<dbReference type="GO" id="GO:0006006">
    <property type="term" value="P:glucose metabolic process"/>
    <property type="evidence" value="ECO:0007669"/>
    <property type="project" value="InterPro"/>
</dbReference>
<dbReference type="GO" id="GO:0006096">
    <property type="term" value="P:glycolytic process"/>
    <property type="evidence" value="ECO:0007669"/>
    <property type="project" value="UniProtKB-UniPathway"/>
</dbReference>
<dbReference type="CDD" id="cd18126">
    <property type="entry name" value="GAPDH_I_C"/>
    <property type="match status" value="1"/>
</dbReference>
<dbReference type="CDD" id="cd05214">
    <property type="entry name" value="GAPDH_I_N"/>
    <property type="match status" value="1"/>
</dbReference>
<dbReference type="FunFam" id="3.30.360.10:FF:000001">
    <property type="entry name" value="Glyceraldehyde-3-phosphate dehydrogenase"/>
    <property type="match status" value="1"/>
</dbReference>
<dbReference type="FunFam" id="3.40.50.720:FF:000266">
    <property type="entry name" value="Glyceraldehyde-3-phosphate dehydrogenase"/>
    <property type="match status" value="1"/>
</dbReference>
<dbReference type="Gene3D" id="3.30.360.10">
    <property type="entry name" value="Dihydrodipicolinate Reductase, domain 2"/>
    <property type="match status" value="1"/>
</dbReference>
<dbReference type="Gene3D" id="3.40.50.720">
    <property type="entry name" value="NAD(P)-binding Rossmann-like Domain"/>
    <property type="match status" value="1"/>
</dbReference>
<dbReference type="InterPro" id="IPR020831">
    <property type="entry name" value="GlycerAld/Erythrose_P_DH"/>
</dbReference>
<dbReference type="InterPro" id="IPR020830">
    <property type="entry name" value="GlycerAld_3-P_DH_AS"/>
</dbReference>
<dbReference type="InterPro" id="IPR020829">
    <property type="entry name" value="GlycerAld_3-P_DH_cat"/>
</dbReference>
<dbReference type="InterPro" id="IPR020828">
    <property type="entry name" value="GlycerAld_3-P_DH_NAD(P)-bd"/>
</dbReference>
<dbReference type="InterPro" id="IPR006424">
    <property type="entry name" value="Glyceraldehyde-3-P_DH_1"/>
</dbReference>
<dbReference type="InterPro" id="IPR036291">
    <property type="entry name" value="NAD(P)-bd_dom_sf"/>
</dbReference>
<dbReference type="NCBIfam" id="TIGR01534">
    <property type="entry name" value="GAPDH-I"/>
    <property type="match status" value="1"/>
</dbReference>
<dbReference type="PANTHER" id="PTHR10836">
    <property type="entry name" value="GLYCERALDEHYDE 3-PHOSPHATE DEHYDROGENASE"/>
    <property type="match status" value="1"/>
</dbReference>
<dbReference type="PANTHER" id="PTHR10836:SF76">
    <property type="entry name" value="GLYCERALDEHYDE-3-PHOSPHATE DEHYDROGENASE-RELATED"/>
    <property type="match status" value="1"/>
</dbReference>
<dbReference type="Pfam" id="PF02800">
    <property type="entry name" value="Gp_dh_C"/>
    <property type="match status" value="1"/>
</dbReference>
<dbReference type="Pfam" id="PF00044">
    <property type="entry name" value="Gp_dh_N"/>
    <property type="match status" value="1"/>
</dbReference>
<dbReference type="PIRSF" id="PIRSF000149">
    <property type="entry name" value="GAP_DH"/>
    <property type="match status" value="1"/>
</dbReference>
<dbReference type="PRINTS" id="PR00078">
    <property type="entry name" value="G3PDHDRGNASE"/>
</dbReference>
<dbReference type="SMART" id="SM00846">
    <property type="entry name" value="Gp_dh_N"/>
    <property type="match status" value="1"/>
</dbReference>
<dbReference type="SUPFAM" id="SSF55347">
    <property type="entry name" value="Glyceraldehyde-3-phosphate dehydrogenase-like, C-terminal domain"/>
    <property type="match status" value="1"/>
</dbReference>
<dbReference type="SUPFAM" id="SSF51735">
    <property type="entry name" value="NAD(P)-binding Rossmann-fold domains"/>
    <property type="match status" value="1"/>
</dbReference>
<dbReference type="PROSITE" id="PS00071">
    <property type="entry name" value="GAPDH"/>
    <property type="match status" value="1"/>
</dbReference>
<name>G3P_ONCVO</name>
<accession>O01360</accession>
<accession>O01656</accession>
<comment type="catalytic activity">
    <reaction evidence="2">
        <text>D-glyceraldehyde 3-phosphate + phosphate + NAD(+) = (2R)-3-phospho-glyceroyl phosphate + NADH + H(+)</text>
        <dbReference type="Rhea" id="RHEA:10300"/>
        <dbReference type="ChEBI" id="CHEBI:15378"/>
        <dbReference type="ChEBI" id="CHEBI:43474"/>
        <dbReference type="ChEBI" id="CHEBI:57540"/>
        <dbReference type="ChEBI" id="CHEBI:57604"/>
        <dbReference type="ChEBI" id="CHEBI:57945"/>
        <dbReference type="ChEBI" id="CHEBI:59776"/>
        <dbReference type="EC" id="1.2.1.12"/>
    </reaction>
</comment>
<comment type="pathway">
    <text>Carbohydrate degradation; glycolysis; pyruvate from D-glyceraldehyde 3-phosphate: step 1/5.</text>
</comment>
<comment type="subunit">
    <text evidence="1">Homotetramer.</text>
</comment>
<comment type="subcellular location">
    <subcellularLocation>
        <location evidence="1">Cytoplasm</location>
    </subcellularLocation>
</comment>
<comment type="similarity">
    <text evidence="3">Belongs to the glyceraldehyde-3-phosphate dehydrogenase family.</text>
</comment>